<protein>
    <recommendedName>
        <fullName>Cytochrome b</fullName>
    </recommendedName>
</protein>
<evidence type="ECO:0000250" key="1"/>
<evidence type="ECO:0000255" key="2">
    <source>
        <dbReference type="PROSITE-ProRule" id="PRU00967"/>
    </source>
</evidence>
<evidence type="ECO:0000255" key="3">
    <source>
        <dbReference type="PROSITE-ProRule" id="PRU00968"/>
    </source>
</evidence>
<evidence type="ECO:0000305" key="4"/>
<evidence type="ECO:0000305" key="5">
    <source>
    </source>
</evidence>
<evidence type="ECO:0007829" key="6">
    <source>
        <dbReference type="PDB" id="2QJK"/>
    </source>
</evidence>
<evidence type="ECO:0007829" key="7">
    <source>
        <dbReference type="PDB" id="2QJY"/>
    </source>
</evidence>
<accession>Q02761</accession>
<name>CYB_CERSP</name>
<reference key="1">
    <citation type="journal article" date="1990" name="Eur. J. Biochem.">
        <title>Cloning and DNA sequencing of the fbc operon encoding the cytochrome bc1 complex from Rhodobacter sphaeroides. Characterization of fbc deletion mutants and complementation by a site-specific mutational variant.</title>
        <authorList>
            <person name="Yun C.-H."/>
            <person name="Beci R."/>
            <person name="Crofts A.R."/>
            <person name="Kaplan S."/>
            <person name="Gennis R.B."/>
        </authorList>
    </citation>
    <scope>NUCLEOTIDE SEQUENCE [GENOMIC DNA]</scope>
</reference>
<reference key="2">
    <citation type="journal article" date="1991" name="J. Biol. Chem.">
        <title>The use of gene fusions to examine the membrane topology of the L-subunit of the photosynthetic reaction center and of the cytochrome b subunit of the bc1 complex from Rhodobacter sphaeroides.</title>
        <authorList>
            <person name="Yun C.H."/>
            <person name="Van Doren S.R."/>
            <person name="Crofts A.R."/>
            <person name="Gennis R.B."/>
        </authorList>
    </citation>
    <scope>TOPOLOGY</scope>
</reference>
<dbReference type="EMBL" id="X56157">
    <property type="protein sequence ID" value="CAA39624.1"/>
    <property type="molecule type" value="Genomic_DNA"/>
</dbReference>
<dbReference type="PIR" id="S13869">
    <property type="entry name" value="S13869"/>
</dbReference>
<dbReference type="RefSeq" id="WP_002722007.1">
    <property type="nucleotide sequence ID" value="NZ_WTFI01000004.1"/>
</dbReference>
<dbReference type="PDB" id="2FYN">
    <property type="method" value="X-ray"/>
    <property type="resolution" value="3.20 A"/>
    <property type="chains" value="A/D/G/J/M/P=1-445"/>
</dbReference>
<dbReference type="PDB" id="2QJK">
    <property type="method" value="X-ray"/>
    <property type="resolution" value="3.10 A"/>
    <property type="chains" value="A/D/G/J/M/P=3-430"/>
</dbReference>
<dbReference type="PDB" id="2QJP">
    <property type="method" value="X-ray"/>
    <property type="resolution" value="2.60 A"/>
    <property type="chains" value="A/D/G/J=3-430"/>
</dbReference>
<dbReference type="PDB" id="2QJY">
    <property type="method" value="X-ray"/>
    <property type="resolution" value="2.40 A"/>
    <property type="chains" value="A/D/G/J/M/P=1-445"/>
</dbReference>
<dbReference type="PDB" id="5KKZ">
    <property type="method" value="X-ray"/>
    <property type="resolution" value="2.97 A"/>
    <property type="chains" value="A/E/K/O=1-445"/>
</dbReference>
<dbReference type="PDB" id="5KLI">
    <property type="method" value="X-ray"/>
    <property type="resolution" value="3.00 A"/>
    <property type="chains" value="A/E/K/O=1-445"/>
</dbReference>
<dbReference type="PDB" id="7TCE">
    <property type="method" value="X-ray"/>
    <property type="resolution" value="3.85 A"/>
    <property type="chains" value="A/E/K/O=1-445"/>
</dbReference>
<dbReference type="PDB" id="7TLJ">
    <property type="method" value="EM"/>
    <property type="resolution" value="2.91 A"/>
    <property type="chains" value="A/E=1-445"/>
</dbReference>
<dbReference type="PDBsum" id="2FYN"/>
<dbReference type="PDBsum" id="2QJK"/>
<dbReference type="PDBsum" id="2QJP"/>
<dbReference type="PDBsum" id="2QJY"/>
<dbReference type="PDBsum" id="5KKZ"/>
<dbReference type="PDBsum" id="5KLI"/>
<dbReference type="PDBsum" id="7TCE"/>
<dbReference type="PDBsum" id="7TLJ"/>
<dbReference type="EMDB" id="EMD-25989"/>
<dbReference type="SMR" id="Q02761"/>
<dbReference type="DIP" id="DIP-61256N"/>
<dbReference type="IntAct" id="Q02761">
    <property type="interactions" value="1"/>
</dbReference>
<dbReference type="DrugBank" id="DB03152">
    <property type="generic name" value="B-2-Octylglucoside"/>
</dbReference>
<dbReference type="DrugBank" id="DB08690">
    <property type="generic name" value="Ubiquinone Q2"/>
</dbReference>
<dbReference type="TCDB" id="3.E.2.1.1">
    <property type="family name" value="the photosynthetic reaction center (prc) family"/>
</dbReference>
<dbReference type="GeneID" id="3720801"/>
<dbReference type="EvolutionaryTrace" id="Q02761"/>
<dbReference type="GO" id="GO:0005886">
    <property type="term" value="C:plasma membrane"/>
    <property type="evidence" value="ECO:0007669"/>
    <property type="project" value="UniProtKB-SubCell"/>
</dbReference>
<dbReference type="GO" id="GO:0045275">
    <property type="term" value="C:respiratory chain complex III"/>
    <property type="evidence" value="ECO:0007669"/>
    <property type="project" value="InterPro"/>
</dbReference>
<dbReference type="GO" id="GO:0046872">
    <property type="term" value="F:metal ion binding"/>
    <property type="evidence" value="ECO:0007669"/>
    <property type="project" value="UniProtKB-KW"/>
</dbReference>
<dbReference type="GO" id="GO:0008121">
    <property type="term" value="F:ubiquinol-cytochrome-c reductase activity"/>
    <property type="evidence" value="ECO:0007669"/>
    <property type="project" value="InterPro"/>
</dbReference>
<dbReference type="GO" id="GO:0022904">
    <property type="term" value="P:respiratory electron transport chain"/>
    <property type="evidence" value="ECO:0007669"/>
    <property type="project" value="InterPro"/>
</dbReference>
<dbReference type="CDD" id="cd00290">
    <property type="entry name" value="cytochrome_b_C"/>
    <property type="match status" value="1"/>
</dbReference>
<dbReference type="CDD" id="cd00284">
    <property type="entry name" value="Cytochrome_b_N"/>
    <property type="match status" value="1"/>
</dbReference>
<dbReference type="FunFam" id="1.20.810.10:FF:000010">
    <property type="entry name" value="Cytochrome b"/>
    <property type="match status" value="1"/>
</dbReference>
<dbReference type="Gene3D" id="1.20.810.10">
    <property type="entry name" value="Cytochrome Bc1 Complex, Chain C"/>
    <property type="match status" value="1"/>
</dbReference>
<dbReference type="InterPro" id="IPR005798">
    <property type="entry name" value="Cyt_b/b6_C"/>
</dbReference>
<dbReference type="InterPro" id="IPR036150">
    <property type="entry name" value="Cyt_b/b6_C_sf"/>
</dbReference>
<dbReference type="InterPro" id="IPR005797">
    <property type="entry name" value="Cyt_b/b6_N"/>
</dbReference>
<dbReference type="InterPro" id="IPR027387">
    <property type="entry name" value="Cytb/b6-like_sf"/>
</dbReference>
<dbReference type="InterPro" id="IPR030689">
    <property type="entry name" value="Cytochrome_b"/>
</dbReference>
<dbReference type="InterPro" id="IPR048260">
    <property type="entry name" value="Cytochrome_b_C_euk/bac"/>
</dbReference>
<dbReference type="InterPro" id="IPR048259">
    <property type="entry name" value="Cytochrome_b_N_euk/bac"/>
</dbReference>
<dbReference type="InterPro" id="IPR016174">
    <property type="entry name" value="Di-haem_cyt_TM"/>
</dbReference>
<dbReference type="PANTHER" id="PTHR19271">
    <property type="entry name" value="CYTOCHROME B"/>
    <property type="match status" value="1"/>
</dbReference>
<dbReference type="PANTHER" id="PTHR19271:SF16">
    <property type="entry name" value="CYTOCHROME B"/>
    <property type="match status" value="1"/>
</dbReference>
<dbReference type="Pfam" id="PF00032">
    <property type="entry name" value="Cytochrom_B_C"/>
    <property type="match status" value="1"/>
</dbReference>
<dbReference type="Pfam" id="PF00033">
    <property type="entry name" value="Cytochrome_B"/>
    <property type="match status" value="1"/>
</dbReference>
<dbReference type="PIRSF" id="PIRSF038885">
    <property type="entry name" value="COB"/>
    <property type="match status" value="1"/>
</dbReference>
<dbReference type="SUPFAM" id="SSF81648">
    <property type="entry name" value="a domain/subunit of cytochrome bc1 complex (Ubiquinol-cytochrome c reductase)"/>
    <property type="match status" value="1"/>
</dbReference>
<dbReference type="SUPFAM" id="SSF81342">
    <property type="entry name" value="Transmembrane di-heme cytochromes"/>
    <property type="match status" value="1"/>
</dbReference>
<dbReference type="PROSITE" id="PS51003">
    <property type="entry name" value="CYTB_CTER"/>
    <property type="match status" value="1"/>
</dbReference>
<dbReference type="PROSITE" id="PS51002">
    <property type="entry name" value="CYTB_NTER"/>
    <property type="match status" value="1"/>
</dbReference>
<comment type="function">
    <text evidence="1">Component of the ubiquinol-cytochrome c reductase complex (complex III or cytochrome b-c1 complex), which is a respiratory chain that generates an electrochemical potential coupled to ATP synthesis.</text>
</comment>
<comment type="cofactor">
    <cofactor evidence="1">
        <name>heme b</name>
        <dbReference type="ChEBI" id="CHEBI:60344"/>
    </cofactor>
    <text evidence="1">Binds 2 heme b groups non-covalently.</text>
</comment>
<comment type="subunit">
    <text evidence="1">The main subunits of complex b-c1 are: cytochrome b, cytochrome c1 and the Rieske protein.</text>
</comment>
<comment type="subcellular location">
    <subcellularLocation>
        <location>Cell membrane</location>
        <topology>Multi-pass membrane protein</topology>
    </subcellularLocation>
</comment>
<comment type="miscellaneous">
    <text evidence="1">Heme 1 (or BL or b562) is low-potential and absorbs at about 562 nm, and heme 2 (or BH or b566) is high-potential and absorbs at about 566 nm.</text>
</comment>
<comment type="similarity">
    <text evidence="2 3">Belongs to the cytochrome b family.</text>
</comment>
<keyword id="KW-0002">3D-structure</keyword>
<keyword id="KW-1003">Cell membrane</keyword>
<keyword id="KW-0249">Electron transport</keyword>
<keyword id="KW-0349">Heme</keyword>
<keyword id="KW-0408">Iron</keyword>
<keyword id="KW-0472">Membrane</keyword>
<keyword id="KW-0479">Metal-binding</keyword>
<keyword id="KW-0679">Respiratory chain</keyword>
<keyword id="KW-0812">Transmembrane</keyword>
<keyword id="KW-1133">Transmembrane helix</keyword>
<keyword id="KW-0813">Transport</keyword>
<gene>
    <name type="primary">petB</name>
    <name type="synonym">fbcB</name>
</gene>
<proteinExistence type="evidence at protein level"/>
<organism>
    <name type="scientific">Cereibacter sphaeroides</name>
    <name type="common">Rhodobacter sphaeroides</name>
    <dbReference type="NCBI Taxonomy" id="1063"/>
    <lineage>
        <taxon>Bacteria</taxon>
        <taxon>Pseudomonadati</taxon>
        <taxon>Pseudomonadota</taxon>
        <taxon>Alphaproteobacteria</taxon>
        <taxon>Rhodobacterales</taxon>
        <taxon>Paracoccaceae</taxon>
        <taxon>Cereibacter</taxon>
    </lineage>
</organism>
<sequence>MSGIPHDHYEPRTGIEKWLHSRLPIVALAYDTIMIPTPRNLNWMWIWGVVLAFCLVLQIVTGIVLAMHYTPHVDLAFASVEHIMRNVNGGFMLRYLHANGASLFFIAVYLHIFRGLYYGSYKAPREVTWIVGMLIYLAMMATAFMGYVLPWGQMSFWGATVITGLFGAIPGIGHSIQTWLLGGPAVDNATLNRFFSLHYLLPFVIAALVAIHIWAFHSTGNNNPTGVEVRRTSKAEAQKDTVPFWPYFIIKDVFALAVVLLVFFAIVGFMPNYLGHPDNYIEANPLSTPAHIVPEWYFLPFYAILRAFTADVWVVQIANFISFGIIDAKFFGVLAMFGAILVMALVPWLDTSPVRSGRYRPMFKIYFWLLAADFVILTWVGAQQTTFPYDWISLIASAYWFAYFLVILPILGAIEKPVAPPATIEEDFNAHYSPATGGTKTVVAE</sequence>
<feature type="initiator methionine" description="Removed" evidence="1">
    <location>
        <position position="1"/>
    </location>
</feature>
<feature type="chain" id="PRO_0000061774" description="Cytochrome b">
    <location>
        <begin position="2"/>
        <end position="445"/>
    </location>
</feature>
<feature type="topological domain" description="Cytoplasmic" evidence="5">
    <location>
        <begin position="2"/>
        <end position="49"/>
    </location>
</feature>
<feature type="transmembrane region" description="Helical" evidence="4">
    <location>
        <begin position="50"/>
        <end position="67"/>
    </location>
</feature>
<feature type="topological domain" description="Periplasmic" evidence="5">
    <location>
        <begin position="68"/>
        <end position="94"/>
    </location>
</feature>
<feature type="transmembrane region" description="Helical" evidence="4">
    <location>
        <begin position="95"/>
        <end position="113"/>
    </location>
</feature>
<feature type="topological domain" description="Cytoplasmic" evidence="5">
    <location>
        <begin position="114"/>
        <end position="129"/>
    </location>
</feature>
<feature type="transmembrane region" description="Helical" evidence="4">
    <location>
        <begin position="130"/>
        <end position="149"/>
    </location>
</feature>
<feature type="topological domain" description="Periplasmic" evidence="5">
    <location>
        <begin position="150"/>
        <end position="193"/>
    </location>
</feature>
<feature type="transmembrane region" description="Helical" evidence="4">
    <location>
        <begin position="194"/>
        <end position="216"/>
    </location>
</feature>
<feature type="topological domain" description="Cytoplasmic" evidence="5">
    <location>
        <begin position="217"/>
        <end position="252"/>
    </location>
</feature>
<feature type="transmembrane region" description="Helical" evidence="4">
    <location>
        <begin position="253"/>
        <end position="270"/>
    </location>
</feature>
<feature type="topological domain" description="Periplasmic" evidence="5">
    <location>
        <begin position="271"/>
        <end position="329"/>
    </location>
</feature>
<feature type="transmembrane region" description="Helical" evidence="4">
    <location>
        <begin position="330"/>
        <end position="346"/>
    </location>
</feature>
<feature type="topological domain" description="Cytoplasmic" evidence="5">
    <location>
        <begin position="347"/>
        <end position="364"/>
    </location>
</feature>
<feature type="transmembrane region" description="Helical" evidence="4">
    <location>
        <begin position="365"/>
        <end position="382"/>
    </location>
</feature>
<feature type="topological domain" description="Periplasmic" evidence="5">
    <location>
        <begin position="383"/>
        <end position="388"/>
    </location>
</feature>
<feature type="transmembrane region" description="Helical" evidence="4">
    <location>
        <begin position="389"/>
        <end position="408"/>
    </location>
</feature>
<feature type="topological domain" description="Cytoplasmic" evidence="5">
    <location>
        <begin position="409"/>
        <end position="445"/>
    </location>
</feature>
<feature type="binding site" description="axial binding residue">
    <location>
        <position position="97"/>
    </location>
    <ligand>
        <name>heme b</name>
        <dbReference type="ChEBI" id="CHEBI:60344"/>
        <label>b562</label>
    </ligand>
    <ligandPart>
        <name>Fe</name>
        <dbReference type="ChEBI" id="CHEBI:18248"/>
    </ligandPart>
</feature>
<feature type="binding site" description="axial binding residue">
    <location>
        <position position="111"/>
    </location>
    <ligand>
        <name>heme b</name>
        <dbReference type="ChEBI" id="CHEBI:60344"/>
        <label>b566</label>
    </ligand>
    <ligandPart>
        <name>Fe</name>
        <dbReference type="ChEBI" id="CHEBI:18248"/>
    </ligandPart>
</feature>
<feature type="binding site" description="axial binding residue">
    <location>
        <position position="198"/>
    </location>
    <ligand>
        <name>heme b</name>
        <dbReference type="ChEBI" id="CHEBI:60344"/>
        <label>b562</label>
    </ligand>
    <ligandPart>
        <name>Fe</name>
        <dbReference type="ChEBI" id="CHEBI:18248"/>
    </ligandPart>
</feature>
<feature type="binding site" description="axial binding residue">
    <location>
        <position position="212"/>
    </location>
    <ligand>
        <name>heme b</name>
        <dbReference type="ChEBI" id="CHEBI:60344"/>
        <label>b566</label>
    </ligand>
    <ligandPart>
        <name>Fe</name>
        <dbReference type="ChEBI" id="CHEBI:18248"/>
    </ligandPart>
</feature>
<feature type="helix" evidence="7">
    <location>
        <begin position="14"/>
        <end position="20"/>
    </location>
</feature>
<feature type="helix" evidence="7">
    <location>
        <begin position="25"/>
        <end position="33"/>
    </location>
</feature>
<feature type="strand" evidence="7">
    <location>
        <begin position="36"/>
        <end position="38"/>
    </location>
</feature>
<feature type="helix" evidence="7">
    <location>
        <begin position="43"/>
        <end position="45"/>
    </location>
</feature>
<feature type="helix" evidence="7">
    <location>
        <begin position="47"/>
        <end position="66"/>
    </location>
</feature>
<feature type="turn" evidence="7">
    <location>
        <begin position="73"/>
        <end position="75"/>
    </location>
</feature>
<feature type="helix" evidence="7">
    <location>
        <begin position="76"/>
        <end position="85"/>
    </location>
</feature>
<feature type="helix" evidence="7">
    <location>
        <begin position="90"/>
        <end position="118"/>
    </location>
</feature>
<feature type="turn" evidence="7">
    <location>
        <begin position="119"/>
        <end position="121"/>
    </location>
</feature>
<feature type="turn" evidence="6">
    <location>
        <begin position="123"/>
        <end position="125"/>
    </location>
</feature>
<feature type="helix" evidence="7">
    <location>
        <begin position="126"/>
        <end position="148"/>
    </location>
</feature>
<feature type="helix" evidence="7">
    <location>
        <begin position="153"/>
        <end position="167"/>
    </location>
</feature>
<feature type="turn" evidence="7">
    <location>
        <begin position="170"/>
        <end position="172"/>
    </location>
</feature>
<feature type="helix" evidence="7">
    <location>
        <begin position="173"/>
        <end position="181"/>
    </location>
</feature>
<feature type="strand" evidence="7">
    <location>
        <begin position="183"/>
        <end position="186"/>
    </location>
</feature>
<feature type="helix" evidence="7">
    <location>
        <begin position="188"/>
        <end position="219"/>
    </location>
</feature>
<feature type="helix" evidence="7">
    <location>
        <begin position="234"/>
        <end position="240"/>
    </location>
</feature>
<feature type="strand" evidence="7">
    <location>
        <begin position="241"/>
        <end position="243"/>
    </location>
</feature>
<feature type="helix" evidence="7">
    <location>
        <begin position="244"/>
        <end position="269"/>
    </location>
</feature>
<feature type="turn" evidence="7">
    <location>
        <begin position="271"/>
        <end position="274"/>
    </location>
</feature>
<feature type="helix" evidence="7">
    <location>
        <begin position="277"/>
        <end position="280"/>
    </location>
</feature>
<feature type="helix" evidence="7">
    <location>
        <begin position="296"/>
        <end position="298"/>
    </location>
</feature>
<feature type="helix" evidence="7">
    <location>
        <begin position="299"/>
        <end position="307"/>
    </location>
</feature>
<feature type="helix" evidence="7">
    <location>
        <begin position="313"/>
        <end position="321"/>
    </location>
</feature>
<feature type="turn" evidence="7">
    <location>
        <begin position="322"/>
        <end position="324"/>
    </location>
</feature>
<feature type="helix" evidence="7">
    <location>
        <begin position="328"/>
        <end position="344"/>
    </location>
</feature>
<feature type="helix" evidence="7">
    <location>
        <begin position="346"/>
        <end position="349"/>
    </location>
</feature>
<feature type="helix" evidence="7">
    <location>
        <begin position="357"/>
        <end position="359"/>
    </location>
</feature>
<feature type="helix" evidence="7">
    <location>
        <begin position="361"/>
        <end position="381"/>
    </location>
</feature>
<feature type="helix" evidence="7">
    <location>
        <begin position="389"/>
        <end position="405"/>
    </location>
</feature>
<feature type="helix" evidence="7">
    <location>
        <begin position="407"/>
        <end position="414"/>
    </location>
</feature>
<feature type="helix" evidence="7">
    <location>
        <begin position="424"/>
        <end position="429"/>
    </location>
</feature>